<protein>
    <recommendedName>
        <fullName evidence="7">Meiosis-specific protein PAIR3</fullName>
    </recommendedName>
    <alternativeName>
        <fullName evidence="6">Protein HOMOLOGOUS PAIRING ABERRATION IN RICE MEIOSIS 3</fullName>
    </alternativeName>
</protein>
<proteinExistence type="evidence at transcript level"/>
<sequence length="844" mass="93298">MEVELTNIQKATSSDYWSLASNQYPCGKFPKVSVGVTIPRTSSVSRGRDAASTAAFEKNLSQGTDGRSRPPKMDNASLQVSPEAANHGGSAKEVPKPVPAKVSVSQPDDNAIEQTGTFSFGTRREQDSHLDQLDRPPLVSSQGKRQVESADKNKPNSEMLRMKLWEILGGTSQNKEAVASPNPEDIETPCQPKSQIANGPSSGRQKVFTSPVPYNIKTPAQFNSQTANKPSSDPIESDSDSPQVVEVRPITRSLGRKKEPTGSTHQDKSGSAKKPLSTHRSTPKQKILDNVFAFNDKCTPKTVGKSANGESGSLRNLRSLSRRAKVEPKKAHCSDRISHKTTQDDMERKVPSKYIPSEKKGEKTNSFSSLSRTGKTAESCSRSPKRERRVNTMANVGARKMQLSENLLVKTLNDGEHKLSSPQLTSFKSKGKCSSISPQQKENDNTHIPEASDRTAARNSFNSTPSPAANPSPVLRKYSWEHDENPAINGKSGQKDASPLADRFSDMPDDFASPTFAANIKISPHRSKMLDDDLFSSKYPKGVNRSRSTSFTSDPESEPLDKMEKTNELPGSESPNSQEERQNRKQPHLSPLSPIESEGAQISIPSFRKGYKSHKWLSDVDSPDKSSIEHLGRKSHLKEGRKGKRQLTSPTHFATSGTQETMSDKEPEKVPENYLTRAFDQLVVVLGRFQTKIKSETRNKSSKILAATGEIIRQHLEGVEGQMQADVDKLVNAGKSKRKRLESTFEEQQEKLRILHEKFKEEVNQQLLGCKNSVEDFEAYHAELKGVADKQKASHKKLLQNAEKTVGAQLSDAETKIAEVQKRARKRMKGLKFVLKELIAETAE</sequence>
<evidence type="ECO:0000255" key="1"/>
<evidence type="ECO:0000256" key="2">
    <source>
        <dbReference type="SAM" id="MobiDB-lite"/>
    </source>
</evidence>
<evidence type="ECO:0000269" key="3">
    <source>
    </source>
</evidence>
<evidence type="ECO:0000269" key="4">
    <source>
    </source>
</evidence>
<evidence type="ECO:0000269" key="5">
    <source>
    </source>
</evidence>
<evidence type="ECO:0000303" key="6">
    <source>
    </source>
</evidence>
<evidence type="ECO:0000305" key="7"/>
<evidence type="ECO:0000312" key="8">
    <source>
        <dbReference type="EMBL" id="AAK98671.1"/>
    </source>
</evidence>
<evidence type="ECO:0000312" key="9">
    <source>
        <dbReference type="EMBL" id="AAP53684.1"/>
    </source>
</evidence>
<evidence type="ECO:0000312" key="10">
    <source>
        <dbReference type="EMBL" id="BAT10769.1"/>
    </source>
</evidence>
<evidence type="ECO:0000312" key="11">
    <source>
        <dbReference type="EMBL" id="EEE50928.1"/>
    </source>
</evidence>
<name>PAIR3_ORYSJ</name>
<organism>
    <name type="scientific">Oryza sativa subsp. japonica</name>
    <name type="common">Rice</name>
    <dbReference type="NCBI Taxonomy" id="39947"/>
    <lineage>
        <taxon>Eukaryota</taxon>
        <taxon>Viridiplantae</taxon>
        <taxon>Streptophyta</taxon>
        <taxon>Embryophyta</taxon>
        <taxon>Tracheophyta</taxon>
        <taxon>Spermatophyta</taxon>
        <taxon>Magnoliopsida</taxon>
        <taxon>Liliopsida</taxon>
        <taxon>Poales</taxon>
        <taxon>Poaceae</taxon>
        <taxon>BOP clade</taxon>
        <taxon>Oryzoideae</taxon>
        <taxon>Oryzeae</taxon>
        <taxon>Oryzinae</taxon>
        <taxon>Oryza</taxon>
        <taxon>Oryza sativa</taxon>
    </lineage>
</organism>
<reference key="1">
    <citation type="journal article" date="2009" name="Plant J.">
        <title>Mutation of the rice gene PAIR3 results in lack of bivalent formation in meiosis.</title>
        <authorList>
            <person name="Yuan W."/>
            <person name="Li X."/>
            <person name="Chang Y."/>
            <person name="Wen R."/>
            <person name="Chen G."/>
            <person name="Zhang Q."/>
            <person name="Wu C."/>
        </authorList>
    </citation>
    <scope>NUCLEOTIDE SEQUENCE [GENOMIC DNA / MRNA]</scope>
    <scope>FUNCTION</scope>
    <scope>TISSUE SPECIFICITY</scope>
    <scope>DISRUPTION PHENOTYPE</scope>
</reference>
<reference key="2">
    <citation type="journal article" date="2003" name="Science">
        <title>In-depth view of structure, activity, and evolution of rice chromosome 10.</title>
        <authorList>
            <person name="Yu Y."/>
            <person name="Rambo T."/>
            <person name="Currie J."/>
            <person name="Saski C."/>
            <person name="Kim H.-R."/>
            <person name="Collura K."/>
            <person name="Thompson S."/>
            <person name="Simmons J."/>
            <person name="Yang T.-J."/>
            <person name="Nah G."/>
            <person name="Patel A.J."/>
            <person name="Thurmond S."/>
            <person name="Henry D."/>
            <person name="Oates R."/>
            <person name="Palmer M."/>
            <person name="Pries G."/>
            <person name="Gibson J."/>
            <person name="Anderson H."/>
            <person name="Paradkar M."/>
            <person name="Crane L."/>
            <person name="Dale J."/>
            <person name="Carver M.B."/>
            <person name="Wood T."/>
            <person name="Frisch D."/>
            <person name="Engler F."/>
            <person name="Soderlund C."/>
            <person name="Palmer L.E."/>
            <person name="Teytelman L."/>
            <person name="Nascimento L."/>
            <person name="De la Bastide M."/>
            <person name="Spiegel L."/>
            <person name="Ware D."/>
            <person name="O'Shaughnessy A."/>
            <person name="Dike S."/>
            <person name="Dedhia N."/>
            <person name="Preston R."/>
            <person name="Huang E."/>
            <person name="Ferraro K."/>
            <person name="Kuit K."/>
            <person name="Miller B."/>
            <person name="Zutavern T."/>
            <person name="Katzenberger F."/>
            <person name="Muller S."/>
            <person name="Balija V."/>
            <person name="Martienssen R.A."/>
            <person name="Stein L."/>
            <person name="Minx P."/>
            <person name="Johnson D."/>
            <person name="Cordum H."/>
            <person name="Mardis E."/>
            <person name="Cheng Z."/>
            <person name="Jiang J."/>
            <person name="Wilson R."/>
            <person name="McCombie W.R."/>
            <person name="Wing R.A."/>
            <person name="Yuan Q."/>
            <person name="Ouyang S."/>
            <person name="Liu J."/>
            <person name="Jones K.M."/>
            <person name="Gansberger K."/>
            <person name="Moffat K."/>
            <person name="Hill J."/>
            <person name="Tsitrin T."/>
            <person name="Overton L."/>
            <person name="Bera J."/>
            <person name="Kim M."/>
            <person name="Jin S."/>
            <person name="Tallon L."/>
            <person name="Ciecko A."/>
            <person name="Pai G."/>
            <person name="Van Aken S."/>
            <person name="Utterback T."/>
            <person name="Reidmuller S."/>
            <person name="Bormann J."/>
            <person name="Feldblyum T."/>
            <person name="Hsiao J."/>
            <person name="Zismann V."/>
            <person name="Blunt S."/>
            <person name="de Vazeille A.R."/>
            <person name="Shaffer T."/>
            <person name="Koo H."/>
            <person name="Suh B."/>
            <person name="Yang Q."/>
            <person name="Haas B."/>
            <person name="Peterson J."/>
            <person name="Pertea M."/>
            <person name="Volfovsky N."/>
            <person name="Wortman J."/>
            <person name="White O."/>
            <person name="Salzberg S.L."/>
            <person name="Fraser C.M."/>
            <person name="Buell C.R."/>
            <person name="Messing J."/>
            <person name="Song R."/>
            <person name="Fuks G."/>
            <person name="Llaca V."/>
            <person name="Kovchak S."/>
            <person name="Young S."/>
            <person name="Bowers J.E."/>
            <person name="Paterson A.H."/>
            <person name="Johns M.A."/>
            <person name="Mao L."/>
            <person name="Pan H."/>
            <person name="Dean R.A."/>
        </authorList>
    </citation>
    <scope>NUCLEOTIDE SEQUENCE [LARGE SCALE GENOMIC DNA]</scope>
    <source>
        <strain>cv. Nipponbare</strain>
    </source>
</reference>
<reference key="3">
    <citation type="journal article" date="2005" name="Nature">
        <title>The map-based sequence of the rice genome.</title>
        <authorList>
            <consortium name="International rice genome sequencing project (IRGSP)"/>
        </authorList>
    </citation>
    <scope>NUCLEOTIDE SEQUENCE [LARGE SCALE GENOMIC DNA]</scope>
    <source>
        <strain>cv. Nipponbare</strain>
    </source>
</reference>
<reference key="4">
    <citation type="journal article" date="2008" name="Nucleic Acids Res.">
        <title>The rice annotation project database (RAP-DB): 2008 update.</title>
        <authorList>
            <consortium name="The rice annotation project (RAP)"/>
        </authorList>
    </citation>
    <scope>GENOME REANNOTATION</scope>
    <source>
        <strain>cv. Nipponbare</strain>
    </source>
</reference>
<reference key="5">
    <citation type="journal article" date="2013" name="Rice">
        <title>Improvement of the Oryza sativa Nipponbare reference genome using next generation sequence and optical map data.</title>
        <authorList>
            <person name="Kawahara Y."/>
            <person name="de la Bastide M."/>
            <person name="Hamilton J.P."/>
            <person name="Kanamori H."/>
            <person name="McCombie W.R."/>
            <person name="Ouyang S."/>
            <person name="Schwartz D.C."/>
            <person name="Tanaka T."/>
            <person name="Wu J."/>
            <person name="Zhou S."/>
            <person name="Childs K.L."/>
            <person name="Davidson R.M."/>
            <person name="Lin H."/>
            <person name="Quesada-Ocampo L."/>
            <person name="Vaillancourt B."/>
            <person name="Sakai H."/>
            <person name="Lee S.S."/>
            <person name="Kim J."/>
            <person name="Numa H."/>
            <person name="Itoh T."/>
            <person name="Buell C.R."/>
            <person name="Matsumoto T."/>
        </authorList>
    </citation>
    <scope>GENOME REANNOTATION</scope>
    <source>
        <strain>cv. Nipponbare</strain>
    </source>
</reference>
<reference key="6">
    <citation type="journal article" date="2005" name="PLoS Biol.">
        <title>The genomes of Oryza sativa: a history of duplications.</title>
        <authorList>
            <person name="Yu J."/>
            <person name="Wang J."/>
            <person name="Lin W."/>
            <person name="Li S."/>
            <person name="Li H."/>
            <person name="Zhou J."/>
            <person name="Ni P."/>
            <person name="Dong W."/>
            <person name="Hu S."/>
            <person name="Zeng C."/>
            <person name="Zhang J."/>
            <person name="Zhang Y."/>
            <person name="Li R."/>
            <person name="Xu Z."/>
            <person name="Li S."/>
            <person name="Li X."/>
            <person name="Zheng H."/>
            <person name="Cong L."/>
            <person name="Lin L."/>
            <person name="Yin J."/>
            <person name="Geng J."/>
            <person name="Li G."/>
            <person name="Shi J."/>
            <person name="Liu J."/>
            <person name="Lv H."/>
            <person name="Li J."/>
            <person name="Wang J."/>
            <person name="Deng Y."/>
            <person name="Ran L."/>
            <person name="Shi X."/>
            <person name="Wang X."/>
            <person name="Wu Q."/>
            <person name="Li C."/>
            <person name="Ren X."/>
            <person name="Wang J."/>
            <person name="Wang X."/>
            <person name="Li D."/>
            <person name="Liu D."/>
            <person name="Zhang X."/>
            <person name="Ji Z."/>
            <person name="Zhao W."/>
            <person name="Sun Y."/>
            <person name="Zhang Z."/>
            <person name="Bao J."/>
            <person name="Han Y."/>
            <person name="Dong L."/>
            <person name="Ji J."/>
            <person name="Chen P."/>
            <person name="Wu S."/>
            <person name="Liu J."/>
            <person name="Xiao Y."/>
            <person name="Bu D."/>
            <person name="Tan J."/>
            <person name="Yang L."/>
            <person name="Ye C."/>
            <person name="Zhang J."/>
            <person name="Xu J."/>
            <person name="Zhou Y."/>
            <person name="Yu Y."/>
            <person name="Zhang B."/>
            <person name="Zhuang S."/>
            <person name="Wei H."/>
            <person name="Liu B."/>
            <person name="Lei M."/>
            <person name="Yu H."/>
            <person name="Li Y."/>
            <person name="Xu H."/>
            <person name="Wei S."/>
            <person name="He X."/>
            <person name="Fang L."/>
            <person name="Zhang Z."/>
            <person name="Zhang Y."/>
            <person name="Huang X."/>
            <person name="Su Z."/>
            <person name="Tong W."/>
            <person name="Li J."/>
            <person name="Tong Z."/>
            <person name="Li S."/>
            <person name="Ye J."/>
            <person name="Wang L."/>
            <person name="Fang L."/>
            <person name="Lei T."/>
            <person name="Chen C.-S."/>
            <person name="Chen H.-C."/>
            <person name="Xu Z."/>
            <person name="Li H."/>
            <person name="Huang H."/>
            <person name="Zhang F."/>
            <person name="Xu H."/>
            <person name="Li N."/>
            <person name="Zhao C."/>
            <person name="Li S."/>
            <person name="Dong L."/>
            <person name="Huang Y."/>
            <person name="Li L."/>
            <person name="Xi Y."/>
            <person name="Qi Q."/>
            <person name="Li W."/>
            <person name="Zhang B."/>
            <person name="Hu W."/>
            <person name="Zhang Y."/>
            <person name="Tian X."/>
            <person name="Jiao Y."/>
            <person name="Liang X."/>
            <person name="Jin J."/>
            <person name="Gao L."/>
            <person name="Zheng W."/>
            <person name="Hao B."/>
            <person name="Liu S.-M."/>
            <person name="Wang W."/>
            <person name="Yuan L."/>
            <person name="Cao M."/>
            <person name="McDermott J."/>
            <person name="Samudrala R."/>
            <person name="Wang J."/>
            <person name="Wong G.K.-S."/>
            <person name="Yang H."/>
        </authorList>
    </citation>
    <scope>NUCLEOTIDE SEQUENCE [LARGE SCALE GENOMIC DNA]</scope>
    <source>
        <strain>cv. Nipponbare</strain>
    </source>
</reference>
<reference key="7">
    <citation type="journal article" date="2011" name="Mol. Biol. Cell">
        <title>PAIR3, an axis-associated protein, is essential for the recruitment of recombination elements onto meiotic chromosomes in rice.</title>
        <authorList>
            <person name="Wang K."/>
            <person name="Wang M."/>
            <person name="Tang D."/>
            <person name="Shen Y."/>
            <person name="Qin B."/>
            <person name="Li M."/>
            <person name="Cheng Z."/>
        </authorList>
    </citation>
    <scope>FUNCTION</scope>
    <scope>SUBCELLULAR LOCATION</scope>
</reference>
<reference key="8">
    <citation type="journal article" date="2016" name="Plant Cell">
        <title>MEIOTIC F-BOX is essential for male meiotic DNA double-strand break repair in rice.</title>
        <authorList>
            <person name="He Y."/>
            <person name="Wang C."/>
            <person name="Higgins J.D."/>
            <person name="Yu J."/>
            <person name="Zong J."/>
            <person name="Lu P."/>
            <person name="Zhang D."/>
            <person name="Liang W."/>
        </authorList>
    </citation>
    <scope>SUBCELLULAR LOCATION</scope>
</reference>
<accession>B9G5N1</accession>
<accession>Q0IXX0</accession>
<accession>Q7XEV4</accession>
<accession>Q948J1</accession>
<gene>
    <name evidence="6" type="primary">PAIR3</name>
    <name evidence="10" type="ordered locus">Os10g0405500</name>
    <name evidence="9" type="ordered locus">LOC_Os10g26560</name>
    <name evidence="11" type="ORF">OsJ_31462</name>
    <name evidence="8" type="ORF">OSJNBa0060A14.5</name>
</gene>
<comment type="function">
    <text evidence="3 4">Plays a crucial role in homologous chromosome pairing and synapsis in meiosis. Does not seem required for cytokinesis (PubMed:19392701). Is essential for meiotic bouquet formation, homologous chromosome pairing and normal recombination, and synaptonemal complex (SC) assembly. Required for the proper association of PAIR2 with chromosomes (PubMed:21119003).</text>
</comment>
<comment type="subcellular location">
    <subcellularLocation>
        <location evidence="4 5">Chromosome</location>
    </subcellularLocation>
    <subcellularLocation>
        <location evidence="4">Nucleus</location>
    </subcellularLocation>
    <text evidence="4 5">During interphase-early leptotene, distributed as numerous punctuate foci throughout the chromatin. Associates with chromosomal axes at leptotene, zygotene and pachytene (PubMed:21119003). Associates with chromosomal axes at zygotene (PubMed:27436711).</text>
</comment>
<comment type="tissue specificity">
    <text evidence="3">Expressed in pollen mother cells and the ovule tissues during meiosis.</text>
</comment>
<comment type="disruption phenotype">
    <text evidence="3">Sterility in both male and female gametes.</text>
</comment>
<comment type="sequence caution" evidence="7">
    <conflict type="erroneous gene model prediction">
        <sequence resource="EMBL-CDS" id="AAK98671"/>
    </conflict>
</comment>
<comment type="sequence caution" evidence="7">
    <conflict type="erroneous gene model prediction">
        <sequence resource="EMBL-CDS" id="AAP53684"/>
    </conflict>
</comment>
<comment type="sequence caution" evidence="7">
    <conflict type="erroneous gene model prediction">
        <sequence resource="EMBL-CDS" id="BAF26473"/>
    </conflict>
</comment>
<dbReference type="EMBL" id="FJ449711">
    <property type="protein sequence ID" value="ACN49116.1"/>
    <property type="molecule type" value="Genomic_DNA"/>
</dbReference>
<dbReference type="EMBL" id="FJ449712">
    <property type="protein sequence ID" value="ACN49117.1"/>
    <property type="molecule type" value="mRNA"/>
</dbReference>
<dbReference type="EMBL" id="AC021893">
    <property type="protein sequence ID" value="AAK98671.1"/>
    <property type="status" value="ALT_SEQ"/>
    <property type="molecule type" value="Genomic_DNA"/>
</dbReference>
<dbReference type="EMBL" id="DP000086">
    <property type="protein sequence ID" value="AAP53684.1"/>
    <property type="status" value="ALT_SEQ"/>
    <property type="molecule type" value="Genomic_DNA"/>
</dbReference>
<dbReference type="EMBL" id="AP008216">
    <property type="protein sequence ID" value="BAF26473.2"/>
    <property type="status" value="ALT_SEQ"/>
    <property type="molecule type" value="Genomic_DNA"/>
</dbReference>
<dbReference type="EMBL" id="AP014966">
    <property type="protein sequence ID" value="BAT10769.1"/>
    <property type="molecule type" value="Genomic_DNA"/>
</dbReference>
<dbReference type="EMBL" id="CM000147">
    <property type="protein sequence ID" value="EEE50928.1"/>
    <property type="molecule type" value="Genomic_DNA"/>
</dbReference>
<dbReference type="RefSeq" id="XP_015614883.1">
    <property type="nucleotide sequence ID" value="XM_015759397.1"/>
</dbReference>
<dbReference type="SMR" id="B9G5N1"/>
<dbReference type="FunCoup" id="B9G5N1">
    <property type="interactions" value="218"/>
</dbReference>
<dbReference type="STRING" id="39947.B9G5N1"/>
<dbReference type="PaxDb" id="39947-B9G5N1"/>
<dbReference type="EnsemblPlants" id="Os10t0405500-01">
    <property type="protein sequence ID" value="Os10t0405500-01"/>
    <property type="gene ID" value="Os10g0405500"/>
</dbReference>
<dbReference type="Gramene" id="Os10t0405500-01">
    <property type="protein sequence ID" value="Os10t0405500-01"/>
    <property type="gene ID" value="Os10g0405500"/>
</dbReference>
<dbReference type="KEGG" id="dosa:Os10g0405500"/>
<dbReference type="eggNOG" id="ENOG502R6IY">
    <property type="taxonomic scope" value="Eukaryota"/>
</dbReference>
<dbReference type="HOGENOM" id="CLU_011891_0_0_1"/>
<dbReference type="InParanoid" id="B9G5N1"/>
<dbReference type="OMA" id="THQDKSG"/>
<dbReference type="OrthoDB" id="751607at2759"/>
<dbReference type="Proteomes" id="UP000000763">
    <property type="component" value="Chromosome 10"/>
</dbReference>
<dbReference type="Proteomes" id="UP000007752">
    <property type="component" value="Chromosome 10"/>
</dbReference>
<dbReference type="Proteomes" id="UP000059680">
    <property type="component" value="Chromosome 10"/>
</dbReference>
<dbReference type="GO" id="GO:0005694">
    <property type="term" value="C:chromosome"/>
    <property type="evidence" value="ECO:0000314"/>
    <property type="project" value="UniProtKB"/>
</dbReference>
<dbReference type="GO" id="GO:0005634">
    <property type="term" value="C:nucleus"/>
    <property type="evidence" value="ECO:0000314"/>
    <property type="project" value="UniProtKB"/>
</dbReference>
<dbReference type="GO" id="GO:0007129">
    <property type="term" value="P:homologous chromosome pairing at meiosis"/>
    <property type="evidence" value="ECO:0000315"/>
    <property type="project" value="UniProtKB"/>
</dbReference>
<dbReference type="InterPro" id="IPR037731">
    <property type="entry name" value="ASY3-like"/>
</dbReference>
<dbReference type="InterPro" id="IPR046845">
    <property type="entry name" value="ASY3-like_CC"/>
</dbReference>
<dbReference type="PANTHER" id="PTHR36027">
    <property type="entry name" value="MEIOSIS-SPECIFIC PROTEIN ASY3"/>
    <property type="match status" value="1"/>
</dbReference>
<dbReference type="PANTHER" id="PTHR36027:SF1">
    <property type="entry name" value="MEIOSIS-SPECIFIC PROTEIN ASY3"/>
    <property type="match status" value="1"/>
</dbReference>
<dbReference type="Pfam" id="PF20435">
    <property type="entry name" value="ASY3-like"/>
    <property type="match status" value="1"/>
</dbReference>
<feature type="chain" id="PRO_0000438700" description="Meiosis-specific protein PAIR3">
    <location>
        <begin position="1"/>
        <end position="844"/>
    </location>
</feature>
<feature type="region of interest" description="Disordered" evidence="2">
    <location>
        <begin position="41"/>
        <end position="389"/>
    </location>
</feature>
<feature type="region of interest" description="Disordered" evidence="2">
    <location>
        <begin position="418"/>
        <end position="506"/>
    </location>
</feature>
<feature type="region of interest" description="Disordered" evidence="2">
    <location>
        <begin position="532"/>
        <end position="604"/>
    </location>
</feature>
<feature type="region of interest" description="Disordered" evidence="2">
    <location>
        <begin position="616"/>
        <end position="669"/>
    </location>
</feature>
<feature type="coiled-coil region" evidence="1">
    <location>
        <begin position="731"/>
        <end position="765"/>
    </location>
</feature>
<feature type="compositionally biased region" description="Polar residues" evidence="2">
    <location>
        <begin position="106"/>
        <end position="120"/>
    </location>
</feature>
<feature type="compositionally biased region" description="Basic and acidic residues" evidence="2">
    <location>
        <begin position="122"/>
        <end position="134"/>
    </location>
</feature>
<feature type="compositionally biased region" description="Basic and acidic residues" evidence="2">
    <location>
        <begin position="145"/>
        <end position="164"/>
    </location>
</feature>
<feature type="compositionally biased region" description="Polar residues" evidence="2">
    <location>
        <begin position="191"/>
        <end position="208"/>
    </location>
</feature>
<feature type="compositionally biased region" description="Polar residues" evidence="2">
    <location>
        <begin position="218"/>
        <end position="229"/>
    </location>
</feature>
<feature type="compositionally biased region" description="Basic and acidic residues" evidence="2">
    <location>
        <begin position="256"/>
        <end position="270"/>
    </location>
</feature>
<feature type="compositionally biased region" description="Basic and acidic residues" evidence="2">
    <location>
        <begin position="324"/>
        <end position="363"/>
    </location>
</feature>
<feature type="compositionally biased region" description="Polar residues" evidence="2">
    <location>
        <begin position="364"/>
        <end position="382"/>
    </location>
</feature>
<feature type="compositionally biased region" description="Polar residues" evidence="2">
    <location>
        <begin position="420"/>
        <end position="440"/>
    </location>
</feature>
<feature type="compositionally biased region" description="Basic and acidic residues" evidence="2">
    <location>
        <begin position="441"/>
        <end position="456"/>
    </location>
</feature>
<feature type="compositionally biased region" description="Low complexity" evidence="2">
    <location>
        <begin position="459"/>
        <end position="473"/>
    </location>
</feature>
<feature type="compositionally biased region" description="Polar residues" evidence="2">
    <location>
        <begin position="545"/>
        <end position="554"/>
    </location>
</feature>
<feature type="compositionally biased region" description="Basic and acidic residues" evidence="2">
    <location>
        <begin position="616"/>
        <end position="640"/>
    </location>
</feature>
<feature type="compositionally biased region" description="Polar residues" evidence="2">
    <location>
        <begin position="646"/>
        <end position="661"/>
    </location>
</feature>
<keyword id="KW-0158">Chromosome</keyword>
<keyword id="KW-0175">Coiled coil</keyword>
<keyword id="KW-0469">Meiosis</keyword>
<keyword id="KW-0539">Nucleus</keyword>
<keyword id="KW-1185">Reference proteome</keyword>